<name>CHAC_SCHPO</name>
<evidence type="ECO:0000250" key="1">
    <source>
        <dbReference type="UniProtKB" id="O75223"/>
    </source>
</evidence>
<evidence type="ECO:0000250" key="2">
    <source>
        <dbReference type="UniProtKB" id="P32656"/>
    </source>
</evidence>
<evidence type="ECO:0000269" key="3">
    <source>
    </source>
</evidence>
<evidence type="ECO:0000305" key="4"/>
<evidence type="ECO:0000312" key="5">
    <source>
        <dbReference type="PomBase" id="SPBC31F10.03"/>
    </source>
</evidence>
<dbReference type="EC" id="4.3.2.7" evidence="2"/>
<dbReference type="EMBL" id="CU329671">
    <property type="protein sequence ID" value="CAB10080.1"/>
    <property type="molecule type" value="Genomic_DNA"/>
</dbReference>
<dbReference type="PIR" id="T40206">
    <property type="entry name" value="T40206"/>
</dbReference>
<dbReference type="SMR" id="P87305"/>
<dbReference type="BioGRID" id="276901">
    <property type="interactions" value="13"/>
</dbReference>
<dbReference type="FunCoup" id="P87305">
    <property type="interactions" value="458"/>
</dbReference>
<dbReference type="STRING" id="284812.P87305"/>
<dbReference type="PaxDb" id="4896-SPBC31F10.03.1"/>
<dbReference type="EnsemblFungi" id="SPBC31F10.03.1">
    <property type="protein sequence ID" value="SPBC31F10.03.1:pep"/>
    <property type="gene ID" value="SPBC31F10.03"/>
</dbReference>
<dbReference type="KEGG" id="spo:2540372"/>
<dbReference type="PomBase" id="SPBC31F10.03"/>
<dbReference type="VEuPathDB" id="FungiDB:SPBC31F10.03"/>
<dbReference type="eggNOG" id="KOG3182">
    <property type="taxonomic scope" value="Eukaryota"/>
</dbReference>
<dbReference type="HOGENOM" id="CLU_070703_0_1_1"/>
<dbReference type="InParanoid" id="P87305"/>
<dbReference type="OMA" id="DHREKDG"/>
<dbReference type="PhylomeDB" id="P87305"/>
<dbReference type="Reactome" id="R-SPO-174403">
    <property type="pathway name" value="Glutathione synthesis and recycling"/>
</dbReference>
<dbReference type="PRO" id="PR:P87305"/>
<dbReference type="Proteomes" id="UP000002485">
    <property type="component" value="Chromosome II"/>
</dbReference>
<dbReference type="GO" id="GO:0005737">
    <property type="term" value="C:cytoplasm"/>
    <property type="evidence" value="ECO:0000318"/>
    <property type="project" value="GO_Central"/>
</dbReference>
<dbReference type="GO" id="GO:0005829">
    <property type="term" value="C:cytosol"/>
    <property type="evidence" value="ECO:0007005"/>
    <property type="project" value="PomBase"/>
</dbReference>
<dbReference type="GO" id="GO:0005634">
    <property type="term" value="C:nucleus"/>
    <property type="evidence" value="ECO:0007005"/>
    <property type="project" value="PomBase"/>
</dbReference>
<dbReference type="GO" id="GO:0016603">
    <property type="term" value="F:glutaminyl-peptide cyclotransferase activity"/>
    <property type="evidence" value="ECO:0000250"/>
    <property type="project" value="PomBase"/>
</dbReference>
<dbReference type="GO" id="GO:0061928">
    <property type="term" value="F:glutathione specific gamma-glutamylcyclotransferase activity"/>
    <property type="evidence" value="ECO:0000318"/>
    <property type="project" value="GO_Central"/>
</dbReference>
<dbReference type="GO" id="GO:1990748">
    <property type="term" value="P:cellular detoxification"/>
    <property type="evidence" value="ECO:0000303"/>
    <property type="project" value="PomBase"/>
</dbReference>
<dbReference type="GO" id="GO:0006751">
    <property type="term" value="P:glutathione catabolic process"/>
    <property type="evidence" value="ECO:0000318"/>
    <property type="project" value="GO_Central"/>
</dbReference>
<dbReference type="CDD" id="cd06661">
    <property type="entry name" value="GGCT_like"/>
    <property type="match status" value="1"/>
</dbReference>
<dbReference type="Gene3D" id="3.10.490.10">
    <property type="entry name" value="Gamma-glutamyl cyclotransferase-like"/>
    <property type="match status" value="1"/>
</dbReference>
<dbReference type="InterPro" id="IPR006840">
    <property type="entry name" value="ChaC"/>
</dbReference>
<dbReference type="InterPro" id="IPR013024">
    <property type="entry name" value="GGCT-like"/>
</dbReference>
<dbReference type="InterPro" id="IPR036568">
    <property type="entry name" value="GGCT-like_sf"/>
</dbReference>
<dbReference type="PANTHER" id="PTHR12192">
    <property type="entry name" value="CATION TRANSPORT PROTEIN CHAC-RELATED"/>
    <property type="match status" value="1"/>
</dbReference>
<dbReference type="PANTHER" id="PTHR12192:SF2">
    <property type="entry name" value="GLUTATHIONE-SPECIFIC GAMMA-GLUTAMYLCYCLOTRANSFERASE 2"/>
    <property type="match status" value="1"/>
</dbReference>
<dbReference type="Pfam" id="PF04752">
    <property type="entry name" value="ChaC"/>
    <property type="match status" value="1"/>
</dbReference>
<dbReference type="SUPFAM" id="SSF110857">
    <property type="entry name" value="Gamma-glutamyl cyclotransferase-like"/>
    <property type="match status" value="1"/>
</dbReference>
<reference key="1">
    <citation type="journal article" date="2002" name="Nature">
        <title>The genome sequence of Schizosaccharomyces pombe.</title>
        <authorList>
            <person name="Wood V."/>
            <person name="Gwilliam R."/>
            <person name="Rajandream M.A."/>
            <person name="Lyne M.H."/>
            <person name="Lyne R."/>
            <person name="Stewart A."/>
            <person name="Sgouros J.G."/>
            <person name="Peat N."/>
            <person name="Hayles J."/>
            <person name="Baker S.G."/>
            <person name="Basham D."/>
            <person name="Bowman S."/>
            <person name="Brooks K."/>
            <person name="Brown D."/>
            <person name="Brown S."/>
            <person name="Chillingworth T."/>
            <person name="Churcher C.M."/>
            <person name="Collins M."/>
            <person name="Connor R."/>
            <person name="Cronin A."/>
            <person name="Davis P."/>
            <person name="Feltwell T."/>
            <person name="Fraser A."/>
            <person name="Gentles S."/>
            <person name="Goble A."/>
            <person name="Hamlin N."/>
            <person name="Harris D.E."/>
            <person name="Hidalgo J."/>
            <person name="Hodgson G."/>
            <person name="Holroyd S."/>
            <person name="Hornsby T."/>
            <person name="Howarth S."/>
            <person name="Huckle E.J."/>
            <person name="Hunt S."/>
            <person name="Jagels K."/>
            <person name="James K.D."/>
            <person name="Jones L."/>
            <person name="Jones M."/>
            <person name="Leather S."/>
            <person name="McDonald S."/>
            <person name="McLean J."/>
            <person name="Mooney P."/>
            <person name="Moule S."/>
            <person name="Mungall K.L."/>
            <person name="Murphy L.D."/>
            <person name="Niblett D."/>
            <person name="Odell C."/>
            <person name="Oliver K."/>
            <person name="O'Neil S."/>
            <person name="Pearson D."/>
            <person name="Quail M.A."/>
            <person name="Rabbinowitsch E."/>
            <person name="Rutherford K.M."/>
            <person name="Rutter S."/>
            <person name="Saunders D."/>
            <person name="Seeger K."/>
            <person name="Sharp S."/>
            <person name="Skelton J."/>
            <person name="Simmonds M.N."/>
            <person name="Squares R."/>
            <person name="Squares S."/>
            <person name="Stevens K."/>
            <person name="Taylor K."/>
            <person name="Taylor R.G."/>
            <person name="Tivey A."/>
            <person name="Walsh S.V."/>
            <person name="Warren T."/>
            <person name="Whitehead S."/>
            <person name="Woodward J.R."/>
            <person name="Volckaert G."/>
            <person name="Aert R."/>
            <person name="Robben J."/>
            <person name="Grymonprez B."/>
            <person name="Weltjens I."/>
            <person name="Vanstreels E."/>
            <person name="Rieger M."/>
            <person name="Schaefer M."/>
            <person name="Mueller-Auer S."/>
            <person name="Gabel C."/>
            <person name="Fuchs M."/>
            <person name="Duesterhoeft A."/>
            <person name="Fritzc C."/>
            <person name="Holzer E."/>
            <person name="Moestl D."/>
            <person name="Hilbert H."/>
            <person name="Borzym K."/>
            <person name="Langer I."/>
            <person name="Beck A."/>
            <person name="Lehrach H."/>
            <person name="Reinhardt R."/>
            <person name="Pohl T.M."/>
            <person name="Eger P."/>
            <person name="Zimmermann W."/>
            <person name="Wedler H."/>
            <person name="Wambutt R."/>
            <person name="Purnelle B."/>
            <person name="Goffeau A."/>
            <person name="Cadieu E."/>
            <person name="Dreano S."/>
            <person name="Gloux S."/>
            <person name="Lelaure V."/>
            <person name="Mottier S."/>
            <person name="Galibert F."/>
            <person name="Aves S.J."/>
            <person name="Xiang Z."/>
            <person name="Hunt C."/>
            <person name="Moore K."/>
            <person name="Hurst S.M."/>
            <person name="Lucas M."/>
            <person name="Rochet M."/>
            <person name="Gaillardin C."/>
            <person name="Tallada V.A."/>
            <person name="Garzon A."/>
            <person name="Thode G."/>
            <person name="Daga R.R."/>
            <person name="Cruzado L."/>
            <person name="Jimenez J."/>
            <person name="Sanchez M."/>
            <person name="del Rey F."/>
            <person name="Benito J."/>
            <person name="Dominguez A."/>
            <person name="Revuelta J.L."/>
            <person name="Moreno S."/>
            <person name="Armstrong J."/>
            <person name="Forsburg S.L."/>
            <person name="Cerutti L."/>
            <person name="Lowe T."/>
            <person name="McCombie W.R."/>
            <person name="Paulsen I."/>
            <person name="Potashkin J."/>
            <person name="Shpakovski G.V."/>
            <person name="Ussery D."/>
            <person name="Barrell B.G."/>
            <person name="Nurse P."/>
        </authorList>
    </citation>
    <scope>NUCLEOTIDE SEQUENCE [LARGE SCALE GENOMIC DNA]</scope>
    <source>
        <strain>972 / ATCC 24843</strain>
    </source>
</reference>
<reference key="2">
    <citation type="journal article" date="2006" name="Nat. Biotechnol.">
        <title>ORFeome cloning and global analysis of protein localization in the fission yeast Schizosaccharomyces pombe.</title>
        <authorList>
            <person name="Matsuyama A."/>
            <person name="Arai R."/>
            <person name="Yashiroda Y."/>
            <person name="Shirai A."/>
            <person name="Kamata A."/>
            <person name="Sekido S."/>
            <person name="Kobayashi Y."/>
            <person name="Hashimoto A."/>
            <person name="Hamamoto M."/>
            <person name="Hiraoka Y."/>
            <person name="Horinouchi S."/>
            <person name="Yoshida M."/>
        </authorList>
    </citation>
    <scope>SUBCELLULAR LOCATION [LARGE SCALE ANALYSIS]</scope>
</reference>
<accession>P87305</accession>
<keyword id="KW-0963">Cytoplasm</keyword>
<keyword id="KW-0456">Lyase</keyword>
<keyword id="KW-0539">Nucleus</keyword>
<keyword id="KW-1185">Reference proteome</keyword>
<proteinExistence type="inferred from homology"/>
<sequence>MKTLSPEGSLWVFGYGSLIWHPPPHYDYSIPCFIKGYVRRFWMRSEDHRGTVNSPGLVLTLIPYEEWKQFSDWSFTPFDEGCWGMAFRIPAKYATQVREYLDDREVNGYTAHSVPVYAHTGDEIPVLENCLVYVGTSKSPQFQPSDDLTQMAKIISTRRGKSGDNFVYLFELAKCLRHLSPESKDIHVFELEAEVRKQMQKTR</sequence>
<comment type="function">
    <text evidence="2">Gamma-glutamylcyclotransferase acting specifically on glutathione, but not on other gamma-glutamyl peptides. Allows utilization of gluthathione through subsequent cleavage of the Cys-Gly dipeptide by Cys-Gly metallodipeptidase dug1.</text>
</comment>
<comment type="catalytic activity">
    <reaction evidence="2">
        <text>glutathione = L-cysteinylglycine + 5-oxo-L-proline</text>
        <dbReference type="Rhea" id="RHEA:47724"/>
        <dbReference type="ChEBI" id="CHEBI:57925"/>
        <dbReference type="ChEBI" id="CHEBI:58402"/>
        <dbReference type="ChEBI" id="CHEBI:61694"/>
        <dbReference type="EC" id="4.3.2.7"/>
    </reaction>
</comment>
<comment type="subcellular location">
    <subcellularLocation>
        <location evidence="3">Cytoplasm</location>
    </subcellularLocation>
    <subcellularLocation>
        <location evidence="3">Nucleus</location>
    </subcellularLocation>
</comment>
<comment type="similarity">
    <text evidence="4">Belongs to the gamma-glutamylcyclotransferase family. ChaC subfamily.</text>
</comment>
<organism>
    <name type="scientific">Schizosaccharomyces pombe (strain 972 / ATCC 24843)</name>
    <name type="common">Fission yeast</name>
    <dbReference type="NCBI Taxonomy" id="284812"/>
    <lineage>
        <taxon>Eukaryota</taxon>
        <taxon>Fungi</taxon>
        <taxon>Dikarya</taxon>
        <taxon>Ascomycota</taxon>
        <taxon>Taphrinomycotina</taxon>
        <taxon>Schizosaccharomycetes</taxon>
        <taxon>Schizosaccharomycetales</taxon>
        <taxon>Schizosaccharomycetaceae</taxon>
        <taxon>Schizosaccharomyces</taxon>
    </lineage>
</organism>
<protein>
    <recommendedName>
        <fullName evidence="2">Glutathione-specific gamma-glutamylcyclotransferase</fullName>
        <shortName evidence="2">Gamma-GCG</shortName>
        <ecNumber evidence="2">4.3.2.7</ecNumber>
    </recommendedName>
</protein>
<gene>
    <name evidence="5" type="ORF">SPBC31F10.03</name>
</gene>
<feature type="chain" id="PRO_0000339309" description="Glutathione-specific gamma-glutamylcyclotransferase">
    <location>
        <begin position="1"/>
        <end position="203"/>
    </location>
</feature>
<feature type="active site" description="Proton acceptor" evidence="1">
    <location>
        <position position="105"/>
    </location>
</feature>
<feature type="binding site" evidence="1">
    <location>
        <begin position="12"/>
        <end position="17"/>
    </location>
    <ligand>
        <name>substrate</name>
    </ligand>
</feature>